<dbReference type="EMBL" id="M30780">
    <property type="protein sequence ID" value="AAA27708.1"/>
    <property type="molecule type" value="Genomic_DNA"/>
</dbReference>
<dbReference type="PIR" id="JQ0095">
    <property type="entry name" value="MWAXIB"/>
</dbReference>
<dbReference type="PDB" id="2DRK">
    <property type="method" value="X-ray"/>
    <property type="resolution" value="1.42 A"/>
    <property type="chains" value="A=1094-1147"/>
</dbReference>
<dbReference type="PDB" id="2DRM">
    <property type="method" value="X-ray"/>
    <property type="resolution" value="1.35 A"/>
    <property type="chains" value="A/B/C/D=1094-1147"/>
</dbReference>
<dbReference type="PDBsum" id="2DRK"/>
<dbReference type="PDBsum" id="2DRM"/>
<dbReference type="SMR" id="P19706"/>
<dbReference type="iPTMnet" id="P19706"/>
<dbReference type="VEuPathDB" id="AmoebaDB:ACA1_173680"/>
<dbReference type="EvolutionaryTrace" id="P19706"/>
<dbReference type="GO" id="GO:0031252">
    <property type="term" value="C:cell leading edge"/>
    <property type="evidence" value="ECO:0007669"/>
    <property type="project" value="UniProtKB-ARBA"/>
</dbReference>
<dbReference type="GO" id="GO:0005737">
    <property type="term" value="C:cytoplasm"/>
    <property type="evidence" value="ECO:0007669"/>
    <property type="project" value="TreeGrafter"/>
</dbReference>
<dbReference type="GO" id="GO:0016459">
    <property type="term" value="C:myosin complex"/>
    <property type="evidence" value="ECO:0007669"/>
    <property type="project" value="UniProtKB-KW"/>
</dbReference>
<dbReference type="GO" id="GO:0005886">
    <property type="term" value="C:plasma membrane"/>
    <property type="evidence" value="ECO:0007669"/>
    <property type="project" value="TreeGrafter"/>
</dbReference>
<dbReference type="GO" id="GO:0120025">
    <property type="term" value="C:plasma membrane bounded cell projection"/>
    <property type="evidence" value="ECO:0007669"/>
    <property type="project" value="UniProtKB-ARBA"/>
</dbReference>
<dbReference type="GO" id="GO:0051015">
    <property type="term" value="F:actin filament binding"/>
    <property type="evidence" value="ECO:0007669"/>
    <property type="project" value="TreeGrafter"/>
</dbReference>
<dbReference type="GO" id="GO:0005524">
    <property type="term" value="F:ATP binding"/>
    <property type="evidence" value="ECO:0007669"/>
    <property type="project" value="UniProtKB-KW"/>
</dbReference>
<dbReference type="GO" id="GO:0000146">
    <property type="term" value="F:microfilament motor activity"/>
    <property type="evidence" value="ECO:0007669"/>
    <property type="project" value="TreeGrafter"/>
</dbReference>
<dbReference type="GO" id="GO:0007015">
    <property type="term" value="P:actin filament organization"/>
    <property type="evidence" value="ECO:0007669"/>
    <property type="project" value="TreeGrafter"/>
</dbReference>
<dbReference type="GO" id="GO:0022607">
    <property type="term" value="P:cellular component assembly"/>
    <property type="evidence" value="ECO:0007669"/>
    <property type="project" value="UniProtKB-ARBA"/>
</dbReference>
<dbReference type="GO" id="GO:0043327">
    <property type="term" value="P:chemotaxis to cAMP"/>
    <property type="evidence" value="ECO:0007669"/>
    <property type="project" value="TreeGrafter"/>
</dbReference>
<dbReference type="GO" id="GO:0006897">
    <property type="term" value="P:endocytosis"/>
    <property type="evidence" value="ECO:0007669"/>
    <property type="project" value="UniProtKB-ARBA"/>
</dbReference>
<dbReference type="CDD" id="cd01378">
    <property type="entry name" value="MYSc_Myo1"/>
    <property type="match status" value="1"/>
</dbReference>
<dbReference type="CDD" id="cd00174">
    <property type="entry name" value="SH3"/>
    <property type="match status" value="1"/>
</dbReference>
<dbReference type="FunFam" id="1.10.10.820:FF:000001">
    <property type="entry name" value="Myosin heavy chain"/>
    <property type="match status" value="1"/>
</dbReference>
<dbReference type="FunFam" id="1.20.58.530:FF:000007">
    <property type="entry name" value="Myosin IE"/>
    <property type="match status" value="1"/>
</dbReference>
<dbReference type="FunFam" id="2.30.30.40:FF:000072">
    <property type="entry name" value="Unconventional Myosin IB"/>
    <property type="match status" value="1"/>
</dbReference>
<dbReference type="Gene3D" id="1.10.10.820">
    <property type="match status" value="1"/>
</dbReference>
<dbReference type="Gene3D" id="1.20.5.4820">
    <property type="match status" value="1"/>
</dbReference>
<dbReference type="Gene3D" id="1.20.58.530">
    <property type="match status" value="1"/>
</dbReference>
<dbReference type="Gene3D" id="3.40.850.10">
    <property type="entry name" value="Kinesin motor domain"/>
    <property type="match status" value="1"/>
</dbReference>
<dbReference type="Gene3D" id="1.20.120.720">
    <property type="entry name" value="Myosin VI head, motor domain, U50 subdomain"/>
    <property type="match status" value="1"/>
</dbReference>
<dbReference type="Gene3D" id="2.30.30.40">
    <property type="entry name" value="SH3 Domains"/>
    <property type="match status" value="1"/>
</dbReference>
<dbReference type="InterPro" id="IPR036961">
    <property type="entry name" value="Kinesin_motor_dom_sf"/>
</dbReference>
<dbReference type="InterPro" id="IPR001609">
    <property type="entry name" value="Myosin_head_motor_dom-like"/>
</dbReference>
<dbReference type="InterPro" id="IPR010926">
    <property type="entry name" value="Myosin_TH1"/>
</dbReference>
<dbReference type="InterPro" id="IPR036072">
    <property type="entry name" value="MYSc_Myo1"/>
</dbReference>
<dbReference type="InterPro" id="IPR027417">
    <property type="entry name" value="P-loop_NTPase"/>
</dbReference>
<dbReference type="InterPro" id="IPR036028">
    <property type="entry name" value="SH3-like_dom_sf"/>
</dbReference>
<dbReference type="InterPro" id="IPR001452">
    <property type="entry name" value="SH3_domain"/>
</dbReference>
<dbReference type="PANTHER" id="PTHR13140">
    <property type="entry name" value="MYOSIN"/>
    <property type="match status" value="1"/>
</dbReference>
<dbReference type="PANTHER" id="PTHR13140:SF729">
    <property type="entry name" value="UNCONVENTIONAL MYOSIN-IE"/>
    <property type="match status" value="1"/>
</dbReference>
<dbReference type="Pfam" id="PF00063">
    <property type="entry name" value="Myosin_head"/>
    <property type="match status" value="1"/>
</dbReference>
<dbReference type="Pfam" id="PF06017">
    <property type="entry name" value="Myosin_TH1"/>
    <property type="match status" value="1"/>
</dbReference>
<dbReference type="Pfam" id="PF00018">
    <property type="entry name" value="SH3_1"/>
    <property type="match status" value="1"/>
</dbReference>
<dbReference type="PRINTS" id="PR00193">
    <property type="entry name" value="MYOSINHEAVY"/>
</dbReference>
<dbReference type="PRINTS" id="PR00452">
    <property type="entry name" value="SH3DOMAIN"/>
</dbReference>
<dbReference type="SMART" id="SM00242">
    <property type="entry name" value="MYSc"/>
    <property type="match status" value="1"/>
</dbReference>
<dbReference type="SMART" id="SM00326">
    <property type="entry name" value="SH3"/>
    <property type="match status" value="1"/>
</dbReference>
<dbReference type="SUPFAM" id="SSF52540">
    <property type="entry name" value="P-loop containing nucleoside triphosphate hydrolases"/>
    <property type="match status" value="1"/>
</dbReference>
<dbReference type="SUPFAM" id="SSF50044">
    <property type="entry name" value="SH3-domain"/>
    <property type="match status" value="1"/>
</dbReference>
<dbReference type="PROSITE" id="PS51456">
    <property type="entry name" value="MYOSIN_MOTOR"/>
    <property type="match status" value="1"/>
</dbReference>
<dbReference type="PROSITE" id="PS50002">
    <property type="entry name" value="SH3"/>
    <property type="match status" value="1"/>
</dbReference>
<dbReference type="PROSITE" id="PS51757">
    <property type="entry name" value="TH1"/>
    <property type="match status" value="1"/>
</dbReference>
<reference key="1">
    <citation type="journal article" date="1989" name="Gene">
        <title>Myosin I heavy-chain genes of Acanthamoeba castellanii: cloning of a second gene and evidence for the existence of a third isoform.</title>
        <authorList>
            <person name="Jung G."/>
            <person name="Schmidt C.J."/>
            <person name="Hammer J.A. III"/>
        </authorList>
    </citation>
    <scope>NUCLEOTIDE SEQUENCE [GENOMIC DNA]</scope>
</reference>
<reference key="2">
    <citation type="journal article" date="1989" name="J. Biol. Chem.">
        <title>The localization and sequence of the phosphorylation sites of Acanthamoeba myosins I. An improved method for locating the phosphorylated amino acid.</title>
        <authorList>
            <person name="Brzeska H."/>
            <person name="Lynch T.J."/>
            <person name="Martin B."/>
            <person name="Korn E.D."/>
        </authorList>
    </citation>
    <scope>PROTEIN SEQUENCE OF 538-559</scope>
    <scope>PHOSPHORYLATION AT SER-315</scope>
</reference>
<keyword id="KW-0002">3D-structure</keyword>
<keyword id="KW-0009">Actin-binding</keyword>
<keyword id="KW-0067">ATP-binding</keyword>
<keyword id="KW-0903">Direct protein sequencing</keyword>
<keyword id="KW-0505">Motor protein</keyword>
<keyword id="KW-0518">Myosin</keyword>
<keyword id="KW-0547">Nucleotide-binding</keyword>
<keyword id="KW-0597">Phosphoprotein</keyword>
<keyword id="KW-0728">SH3 domain</keyword>
<proteinExistence type="evidence at protein level"/>
<feature type="chain" id="PRO_0000123361" description="Myosin heavy chain IB">
    <location>
        <begin position="1"/>
        <end position="1147"/>
    </location>
</feature>
<feature type="domain" description="Myosin motor" evidence="3">
    <location>
        <begin position="9"/>
        <end position="677"/>
    </location>
</feature>
<feature type="domain" description="TH1" evidence="4">
    <location>
        <begin position="715"/>
        <end position="900"/>
    </location>
</feature>
<feature type="domain" description="SH3" evidence="2">
    <location>
        <begin position="1090"/>
        <end position="1147"/>
    </location>
</feature>
<feature type="region of interest" description="Actin-binding" evidence="3">
    <location>
        <begin position="551"/>
        <end position="573"/>
    </location>
</feature>
<feature type="region of interest" description="Disordered" evidence="5">
    <location>
        <begin position="901"/>
        <end position="954"/>
    </location>
</feature>
<feature type="region of interest" description="Disordered" evidence="5">
    <location>
        <begin position="969"/>
        <end position="1089"/>
    </location>
</feature>
<feature type="compositionally biased region" description="Gly residues" evidence="5">
    <location>
        <begin position="916"/>
        <end position="951"/>
    </location>
</feature>
<feature type="compositionally biased region" description="Gly residues" evidence="5">
    <location>
        <begin position="975"/>
        <end position="1079"/>
    </location>
</feature>
<feature type="binding site" evidence="1">
    <location>
        <begin position="103"/>
        <end position="110"/>
    </location>
    <ligand>
        <name>ATP</name>
        <dbReference type="ChEBI" id="CHEBI:30616"/>
    </ligand>
</feature>
<feature type="modified residue" description="Phosphoserine" evidence="6">
    <location>
        <position position="315"/>
    </location>
</feature>
<feature type="strand" evidence="8">
    <location>
        <begin position="1094"/>
        <end position="1099"/>
    </location>
</feature>
<feature type="strand" evidence="8">
    <location>
        <begin position="1116"/>
        <end position="1121"/>
    </location>
</feature>
<feature type="strand" evidence="8">
    <location>
        <begin position="1126"/>
        <end position="1132"/>
    </location>
</feature>
<feature type="strand" evidence="8">
    <location>
        <begin position="1135"/>
        <end position="1140"/>
    </location>
</feature>
<feature type="helix" evidence="8">
    <location>
        <begin position="1141"/>
        <end position="1143"/>
    </location>
</feature>
<feature type="strand" evidence="8">
    <location>
        <begin position="1144"/>
        <end position="1146"/>
    </location>
</feature>
<gene>
    <name type="primary">MIB</name>
    <name type="synonym">MIL</name>
</gene>
<organism>
    <name type="scientific">Acanthamoeba castellanii</name>
    <name type="common">Amoeba</name>
    <dbReference type="NCBI Taxonomy" id="5755"/>
    <lineage>
        <taxon>Eukaryota</taxon>
        <taxon>Amoebozoa</taxon>
        <taxon>Discosea</taxon>
        <taxon>Longamoebia</taxon>
        <taxon>Centramoebida</taxon>
        <taxon>Acanthamoebidae</taxon>
        <taxon>Acanthamoeba</taxon>
    </lineage>
</organism>
<protein>
    <recommendedName>
        <fullName>Myosin heavy chain IB</fullName>
    </recommendedName>
    <alternativeName>
        <fullName>Myosin heavy chain IL</fullName>
    </alternativeName>
</protein>
<accession>P19706</accession>
<comment type="function">
    <text>Myosin is a protein that binds to F-actin and has ATPase activity that is activated by F-actin.</text>
</comment>
<comment type="subunit">
    <text>Myosin I heavy chain is single-headed. Dimer of a heavy and a light chain. Inability to self-assemble into filaments.</text>
</comment>
<comment type="domain">
    <text>Myosin tail domain binds directly to anionic phospholipid membranes; myosins I could therefore move actin relative to membranes and vice versa. TH.2 and SH3 bind tightly to F-actin; this together with the nucleotide-sensitive site in the head, allows single molecules of myosin I to cross-link actin filaments.</text>
</comment>
<comment type="miscellaneous">
    <text>This organism expresses at least three isoforms of myosin I heavy-chain, encoded by genes MIA, MIB, and MIC.</text>
</comment>
<comment type="similarity">
    <text evidence="7">Belongs to the TRAFAC class myosin-kinesin ATPase superfamily. Myosin family.</text>
</comment>
<sequence>MGKAAVEQRGVDDLVLMPKITEQDICANLEKRYFNDLIYTNIGPVLISVNPFRRIDALLTDECLHCYRGRYQHEQPPHVYALAEAAYRGVKSENINQCVIISGESGAGKTEASKLVMQYVAAVSGNSGGVDFVKHSNPLLEAFGNAKTLRNNNSSRFGKYFEIHFNRLGEPCGGRITNYLLEKSRVTFQTRGERSFHIFYQLLAGASDAEAQEMQLYAPENFNYLNQSACYTVDGIDDIKEFADTRNAINVMGMTAEEQRQVFHLVAGILHLGNVAFHDGGKGTAAVHDRTPFALKNALLFRVLNTGGAGAKKMSTYNVPQNVEQAASARDALAKTIYSRMFDWIVSKVNEALQKQGGSGDHNNNMIGVLDIFGFEIFEQNGFEQFCINYVNEKLQQYFIELTLKAEQEEYVNEGIQWTPIKYFNNKVVCELIEGKRPPGIFSLLDDICFTMHAQSDGMDGKFLQKCQGGFPSHLHFRGMNNAFSIKHYAGEVTYEAEGFCEKNKDTLFDDLIAVIQESENRLLVSWFPEDTKQLQKKRPTTAGFKLKTSCDALMEALSRCSPHYIRCIKPNDNKAYHDWDATRTKHQVQYLGLLENVRVRRAGFAYRAEFDRFLRRYKKLSPKTWGIWGEWSGAPKDGCQTLLNDLGLDTSQWQLGKSKVFIRYPETLFHLEECLDRKDYDCTLRIQKAWRHWKSRKHQLEQRKMAADLLKGKKERQRHSVNRKYEFDYINYDANYPLQDCVRSSGRDKEATAFTDQVLVLNRRGKPERRDLIVTNEAVYFAMRKKKSGQVVYNLKRRIPLGEIASLSLSTLQDNYVVIHHNQYDMVFENDKKTEIVTILMENYKMSGGRDLPVNFNDNITYKASNGAQRRLTFSKNESASAQPSIKKSRANIQIGIATGLPKETDSSPPNWTPSGGGGGYGGGRGGGGGGRGAAGGGRGGFGGGGGGGYSQPVAQAQPVAQVPQPVAAVPSAGRGGPGMGGPGAGRGGPGMGRGGPGMGGPGAGRGGPGMGGPGGPGRGGPGGPGAGRGGPGGPGAGRGGPGMGGPGGAGRGGPGAGRGGPGMGGPGAGRGGPGAGRGAAPAPAPAAPAKPQVKALYDYDAQTGDELTFKEGDTIIVHQKDPAGWWEGELNGKRGWVPANYVQDI</sequence>
<name>MYSB_ACACA</name>
<evidence type="ECO:0000255" key="1"/>
<evidence type="ECO:0000255" key="2">
    <source>
        <dbReference type="PROSITE-ProRule" id="PRU00192"/>
    </source>
</evidence>
<evidence type="ECO:0000255" key="3">
    <source>
        <dbReference type="PROSITE-ProRule" id="PRU00782"/>
    </source>
</evidence>
<evidence type="ECO:0000255" key="4">
    <source>
        <dbReference type="PROSITE-ProRule" id="PRU01093"/>
    </source>
</evidence>
<evidence type="ECO:0000256" key="5">
    <source>
        <dbReference type="SAM" id="MobiDB-lite"/>
    </source>
</evidence>
<evidence type="ECO:0000269" key="6">
    <source>
    </source>
</evidence>
<evidence type="ECO:0000305" key="7"/>
<evidence type="ECO:0007829" key="8">
    <source>
        <dbReference type="PDB" id="2DRM"/>
    </source>
</evidence>